<gene>
    <name evidence="1" type="primary">trpD</name>
    <name type="ordered locus">SG1400</name>
</gene>
<feature type="chain" id="PRO_1000043072" description="Anthranilate phosphoribosyltransferase">
    <location>
        <begin position="1"/>
        <end position="332"/>
    </location>
</feature>
<feature type="binding site" evidence="1">
    <location>
        <position position="79"/>
    </location>
    <ligand>
        <name>5-phospho-alpha-D-ribose 1-diphosphate</name>
        <dbReference type="ChEBI" id="CHEBI:58017"/>
    </ligand>
</feature>
<feature type="binding site" evidence="1">
    <location>
        <position position="79"/>
    </location>
    <ligand>
        <name>anthranilate</name>
        <dbReference type="ChEBI" id="CHEBI:16567"/>
        <label>1</label>
    </ligand>
</feature>
<feature type="binding site" evidence="1">
    <location>
        <begin position="82"/>
        <end position="83"/>
    </location>
    <ligand>
        <name>5-phospho-alpha-D-ribose 1-diphosphate</name>
        <dbReference type="ChEBI" id="CHEBI:58017"/>
    </ligand>
</feature>
<feature type="binding site" evidence="1">
    <location>
        <position position="87"/>
    </location>
    <ligand>
        <name>5-phospho-alpha-D-ribose 1-diphosphate</name>
        <dbReference type="ChEBI" id="CHEBI:58017"/>
    </ligand>
</feature>
<feature type="binding site" evidence="1">
    <location>
        <begin position="89"/>
        <end position="92"/>
    </location>
    <ligand>
        <name>5-phospho-alpha-D-ribose 1-diphosphate</name>
        <dbReference type="ChEBI" id="CHEBI:58017"/>
    </ligand>
</feature>
<feature type="binding site" evidence="1">
    <location>
        <position position="91"/>
    </location>
    <ligand>
        <name>Mg(2+)</name>
        <dbReference type="ChEBI" id="CHEBI:18420"/>
        <label>1</label>
    </ligand>
</feature>
<feature type="binding site" evidence="1">
    <location>
        <begin position="107"/>
        <end position="115"/>
    </location>
    <ligand>
        <name>5-phospho-alpha-D-ribose 1-diphosphate</name>
        <dbReference type="ChEBI" id="CHEBI:58017"/>
    </ligand>
</feature>
<feature type="binding site" evidence="1">
    <location>
        <position position="110"/>
    </location>
    <ligand>
        <name>anthranilate</name>
        <dbReference type="ChEBI" id="CHEBI:16567"/>
        <label>1</label>
    </ligand>
</feature>
<feature type="binding site" evidence="1">
    <location>
        <position position="119"/>
    </location>
    <ligand>
        <name>5-phospho-alpha-D-ribose 1-diphosphate</name>
        <dbReference type="ChEBI" id="CHEBI:58017"/>
    </ligand>
</feature>
<feature type="binding site" evidence="1">
    <location>
        <position position="165"/>
    </location>
    <ligand>
        <name>anthranilate</name>
        <dbReference type="ChEBI" id="CHEBI:16567"/>
        <label>2</label>
    </ligand>
</feature>
<feature type="binding site" evidence="1">
    <location>
        <position position="223"/>
    </location>
    <ligand>
        <name>Mg(2+)</name>
        <dbReference type="ChEBI" id="CHEBI:18420"/>
        <label>2</label>
    </ligand>
</feature>
<feature type="binding site" evidence="1">
    <location>
        <position position="224"/>
    </location>
    <ligand>
        <name>Mg(2+)</name>
        <dbReference type="ChEBI" id="CHEBI:18420"/>
        <label>1</label>
    </ligand>
</feature>
<feature type="binding site" evidence="1">
    <location>
        <position position="224"/>
    </location>
    <ligand>
        <name>Mg(2+)</name>
        <dbReference type="ChEBI" id="CHEBI:18420"/>
        <label>2</label>
    </ligand>
</feature>
<accession>Q2NT50</accession>
<sequence length="332" mass="35045">MQAILEHLYQGGRISREQSQQLFGAIIQGQLAPEQLAAALISMKVRGEYSEEIAGAASALLADASPFPRPDYTFADIVGTGGDGSNSINISTASAIVAAGCGARVAKHGNRSVSSCSGSSDLLAAFGIRLDMPAALSRQALDELGICFLFAPQYHSGFSHAMPVRQLLKTCTLFNVLGPLINPARPPLALIGVYSPELVLPIAETLRVLGYQRAAVVHGGDMDEVALHAPTHVAELREGTIENYTLNAADFGLSAQPAEALRGGSPEENRDILARLLQGKGEHAHESAVAANVALLLKLFGQENLRDNTHRALEEIHSGAPYARVMALAARG</sequence>
<reference key="1">
    <citation type="journal article" date="2006" name="Genome Res.">
        <title>Massive genome erosion and functional adaptations provide insights into the symbiotic lifestyle of Sodalis glossinidius in the tsetse host.</title>
        <authorList>
            <person name="Toh H."/>
            <person name="Weiss B.L."/>
            <person name="Perkin S.A.H."/>
            <person name="Yamashita A."/>
            <person name="Oshima K."/>
            <person name="Hattori M."/>
            <person name="Aksoy S."/>
        </authorList>
    </citation>
    <scope>NUCLEOTIDE SEQUENCE [LARGE SCALE GENOMIC DNA]</scope>
    <source>
        <strain>morsitans</strain>
    </source>
</reference>
<dbReference type="EC" id="2.4.2.18" evidence="1"/>
<dbReference type="EMBL" id="AP008232">
    <property type="protein sequence ID" value="BAE74675.1"/>
    <property type="molecule type" value="Genomic_DNA"/>
</dbReference>
<dbReference type="SMR" id="Q2NT50"/>
<dbReference type="STRING" id="343509.SG1400"/>
<dbReference type="KEGG" id="sgl:SG1400"/>
<dbReference type="eggNOG" id="COG0547">
    <property type="taxonomic scope" value="Bacteria"/>
</dbReference>
<dbReference type="HOGENOM" id="CLU_034315_2_1_6"/>
<dbReference type="OrthoDB" id="9806430at2"/>
<dbReference type="BioCyc" id="SGLO343509:SGP1_RS12325-MONOMER"/>
<dbReference type="UniPathway" id="UPA00035">
    <property type="reaction ID" value="UER00041"/>
</dbReference>
<dbReference type="Proteomes" id="UP000001932">
    <property type="component" value="Chromosome"/>
</dbReference>
<dbReference type="GO" id="GO:0005829">
    <property type="term" value="C:cytosol"/>
    <property type="evidence" value="ECO:0007669"/>
    <property type="project" value="TreeGrafter"/>
</dbReference>
<dbReference type="GO" id="GO:0004048">
    <property type="term" value="F:anthranilate phosphoribosyltransferase activity"/>
    <property type="evidence" value="ECO:0007669"/>
    <property type="project" value="UniProtKB-UniRule"/>
</dbReference>
<dbReference type="GO" id="GO:0000287">
    <property type="term" value="F:magnesium ion binding"/>
    <property type="evidence" value="ECO:0007669"/>
    <property type="project" value="UniProtKB-UniRule"/>
</dbReference>
<dbReference type="GO" id="GO:0000162">
    <property type="term" value="P:L-tryptophan biosynthetic process"/>
    <property type="evidence" value="ECO:0007669"/>
    <property type="project" value="UniProtKB-UniRule"/>
</dbReference>
<dbReference type="FunFam" id="1.20.970.10:FF:000003">
    <property type="entry name" value="Anthranilate phosphoribosyltransferase"/>
    <property type="match status" value="1"/>
</dbReference>
<dbReference type="FunFam" id="3.40.1030.10:FF:000002">
    <property type="entry name" value="Anthranilate phosphoribosyltransferase"/>
    <property type="match status" value="1"/>
</dbReference>
<dbReference type="Gene3D" id="3.40.1030.10">
    <property type="entry name" value="Nucleoside phosphorylase/phosphoribosyltransferase catalytic domain"/>
    <property type="match status" value="1"/>
</dbReference>
<dbReference type="Gene3D" id="1.20.970.10">
    <property type="entry name" value="Transferase, Pyrimidine Nucleoside Phosphorylase, Chain C"/>
    <property type="match status" value="1"/>
</dbReference>
<dbReference type="HAMAP" id="MF_00211">
    <property type="entry name" value="TrpD"/>
    <property type="match status" value="1"/>
</dbReference>
<dbReference type="InterPro" id="IPR005940">
    <property type="entry name" value="Anthranilate_Pribosyl_Tfrase"/>
</dbReference>
<dbReference type="InterPro" id="IPR000312">
    <property type="entry name" value="Glycosyl_Trfase_fam3"/>
</dbReference>
<dbReference type="InterPro" id="IPR017459">
    <property type="entry name" value="Glycosyl_Trfase_fam3_N_dom"/>
</dbReference>
<dbReference type="InterPro" id="IPR036320">
    <property type="entry name" value="Glycosyl_Trfase_fam3_N_dom_sf"/>
</dbReference>
<dbReference type="InterPro" id="IPR035902">
    <property type="entry name" value="Nuc_phospho_transferase"/>
</dbReference>
<dbReference type="NCBIfam" id="TIGR01245">
    <property type="entry name" value="trpD"/>
    <property type="match status" value="1"/>
</dbReference>
<dbReference type="PANTHER" id="PTHR43285">
    <property type="entry name" value="ANTHRANILATE PHOSPHORIBOSYLTRANSFERASE"/>
    <property type="match status" value="1"/>
</dbReference>
<dbReference type="PANTHER" id="PTHR43285:SF2">
    <property type="entry name" value="ANTHRANILATE PHOSPHORIBOSYLTRANSFERASE"/>
    <property type="match status" value="1"/>
</dbReference>
<dbReference type="Pfam" id="PF02885">
    <property type="entry name" value="Glycos_trans_3N"/>
    <property type="match status" value="1"/>
</dbReference>
<dbReference type="Pfam" id="PF00591">
    <property type="entry name" value="Glycos_transf_3"/>
    <property type="match status" value="1"/>
</dbReference>
<dbReference type="SUPFAM" id="SSF52418">
    <property type="entry name" value="Nucleoside phosphorylase/phosphoribosyltransferase catalytic domain"/>
    <property type="match status" value="1"/>
</dbReference>
<dbReference type="SUPFAM" id="SSF47648">
    <property type="entry name" value="Nucleoside phosphorylase/phosphoribosyltransferase N-terminal domain"/>
    <property type="match status" value="1"/>
</dbReference>
<name>TRPD_SODGM</name>
<organism>
    <name type="scientific">Sodalis glossinidius (strain morsitans)</name>
    <dbReference type="NCBI Taxonomy" id="343509"/>
    <lineage>
        <taxon>Bacteria</taxon>
        <taxon>Pseudomonadati</taxon>
        <taxon>Pseudomonadota</taxon>
        <taxon>Gammaproteobacteria</taxon>
        <taxon>Enterobacterales</taxon>
        <taxon>Bruguierivoracaceae</taxon>
        <taxon>Sodalis</taxon>
    </lineage>
</organism>
<keyword id="KW-0028">Amino-acid biosynthesis</keyword>
<keyword id="KW-0057">Aromatic amino acid biosynthesis</keyword>
<keyword id="KW-0328">Glycosyltransferase</keyword>
<keyword id="KW-0460">Magnesium</keyword>
<keyword id="KW-0479">Metal-binding</keyword>
<keyword id="KW-0808">Transferase</keyword>
<keyword id="KW-0822">Tryptophan biosynthesis</keyword>
<evidence type="ECO:0000255" key="1">
    <source>
        <dbReference type="HAMAP-Rule" id="MF_00211"/>
    </source>
</evidence>
<comment type="function">
    <text evidence="1">Catalyzes the transfer of the phosphoribosyl group of 5-phosphorylribose-1-pyrophosphate (PRPP) to anthranilate to yield N-(5'-phosphoribosyl)-anthranilate (PRA).</text>
</comment>
<comment type="catalytic activity">
    <reaction evidence="1">
        <text>N-(5-phospho-beta-D-ribosyl)anthranilate + diphosphate = 5-phospho-alpha-D-ribose 1-diphosphate + anthranilate</text>
        <dbReference type="Rhea" id="RHEA:11768"/>
        <dbReference type="ChEBI" id="CHEBI:16567"/>
        <dbReference type="ChEBI" id="CHEBI:18277"/>
        <dbReference type="ChEBI" id="CHEBI:33019"/>
        <dbReference type="ChEBI" id="CHEBI:58017"/>
        <dbReference type="EC" id="2.4.2.18"/>
    </reaction>
</comment>
<comment type="cofactor">
    <cofactor evidence="1">
        <name>Mg(2+)</name>
        <dbReference type="ChEBI" id="CHEBI:18420"/>
    </cofactor>
    <text evidence="1">Binds 2 magnesium ions per monomer.</text>
</comment>
<comment type="pathway">
    <text evidence="1">Amino-acid biosynthesis; L-tryptophan biosynthesis; L-tryptophan from chorismate: step 2/5.</text>
</comment>
<comment type="subunit">
    <text evidence="1">Homodimer.</text>
</comment>
<comment type="similarity">
    <text evidence="1">Belongs to the anthranilate phosphoribosyltransferase family.</text>
</comment>
<proteinExistence type="inferred from homology"/>
<protein>
    <recommendedName>
        <fullName evidence="1">Anthranilate phosphoribosyltransferase</fullName>
        <ecNumber evidence="1">2.4.2.18</ecNumber>
    </recommendedName>
</protein>